<reference key="1">
    <citation type="journal article" date="2001" name="Nucleic Acids Res.">
        <title>The complete genome sequence of the murine respiratory pathogen Mycoplasma pulmonis.</title>
        <authorList>
            <person name="Chambaud I."/>
            <person name="Heilig R."/>
            <person name="Ferris S."/>
            <person name="Barbe V."/>
            <person name="Samson D."/>
            <person name="Galisson F."/>
            <person name="Moszer I."/>
            <person name="Dybvig K."/>
            <person name="Wroblewski H."/>
            <person name="Viari A."/>
            <person name="Rocha E.P.C."/>
            <person name="Blanchard A."/>
        </authorList>
    </citation>
    <scope>NUCLEOTIDE SEQUENCE [LARGE SCALE GENOMIC DNA]</scope>
    <source>
        <strain>UAB CTIP</strain>
    </source>
</reference>
<accession>Q98PI9</accession>
<feature type="chain" id="PRO_0000070834" description="Chaperone protein DnaJ">
    <location>
        <begin position="1"/>
        <end position="377"/>
    </location>
</feature>
<feature type="domain" description="J" evidence="1">
    <location>
        <begin position="6"/>
        <end position="70"/>
    </location>
</feature>
<feature type="repeat" description="CXXCXGXG motif">
    <location>
        <begin position="156"/>
        <end position="163"/>
    </location>
</feature>
<feature type="repeat" description="CXXCXGXG motif">
    <location>
        <begin position="173"/>
        <end position="180"/>
    </location>
</feature>
<feature type="repeat" description="CXXCXGXG motif">
    <location>
        <begin position="199"/>
        <end position="206"/>
    </location>
</feature>
<feature type="repeat" description="CXXCXGXG motif">
    <location>
        <begin position="213"/>
        <end position="220"/>
    </location>
</feature>
<feature type="zinc finger region" description="CR-type" evidence="1">
    <location>
        <begin position="143"/>
        <end position="225"/>
    </location>
</feature>
<feature type="binding site" evidence="1">
    <location>
        <position position="156"/>
    </location>
    <ligand>
        <name>Zn(2+)</name>
        <dbReference type="ChEBI" id="CHEBI:29105"/>
        <label>1</label>
    </ligand>
</feature>
<feature type="binding site" evidence="1">
    <location>
        <position position="159"/>
    </location>
    <ligand>
        <name>Zn(2+)</name>
        <dbReference type="ChEBI" id="CHEBI:29105"/>
        <label>1</label>
    </ligand>
</feature>
<feature type="binding site" evidence="1">
    <location>
        <position position="173"/>
    </location>
    <ligand>
        <name>Zn(2+)</name>
        <dbReference type="ChEBI" id="CHEBI:29105"/>
        <label>2</label>
    </ligand>
</feature>
<feature type="binding site" evidence="1">
    <location>
        <position position="176"/>
    </location>
    <ligand>
        <name>Zn(2+)</name>
        <dbReference type="ChEBI" id="CHEBI:29105"/>
        <label>2</label>
    </ligand>
</feature>
<feature type="binding site" evidence="1">
    <location>
        <position position="199"/>
    </location>
    <ligand>
        <name>Zn(2+)</name>
        <dbReference type="ChEBI" id="CHEBI:29105"/>
        <label>2</label>
    </ligand>
</feature>
<feature type="binding site" evidence="1">
    <location>
        <position position="202"/>
    </location>
    <ligand>
        <name>Zn(2+)</name>
        <dbReference type="ChEBI" id="CHEBI:29105"/>
        <label>2</label>
    </ligand>
</feature>
<feature type="binding site" evidence="1">
    <location>
        <position position="213"/>
    </location>
    <ligand>
        <name>Zn(2+)</name>
        <dbReference type="ChEBI" id="CHEBI:29105"/>
        <label>1</label>
    </ligand>
</feature>
<feature type="binding site" evidence="1">
    <location>
        <position position="216"/>
    </location>
    <ligand>
        <name>Zn(2+)</name>
        <dbReference type="ChEBI" id="CHEBI:29105"/>
        <label>1</label>
    </ligand>
</feature>
<sequence>MNKKEDYYKILGIDKSANEKEIKKAYRKLAMEHHPDRSSSKESEAKMREINEAYEVLSNPEKKAIYDKYGHEAANNPGFNGFNAGSAGFGNFGGFSNFGGFDSIFEEFFGGSRSHSKQNSNYPYPGESYSTQVKISFLDSVHGRVISQKLDKYKDCESCNGTGARSKSDIKTCSTCNGRGSVEKLVNSLFGKIKQSVTCSTCNGLGQEITHKCPSCKGAKKIKESISQKISIPAGVISGQEVLLRGFGGPGFNGGPNGDLYIRVYVTEHPYYQRINDDIYVDFPISIVNLILEKPVVVPTPYGDEKIKIKSTFKNDQIITFKGKGFKRKNRVGDLKIRLKFEIPNFSSKVKKNLESLLSETNDSINEDFVKKVNSIK</sequence>
<dbReference type="EMBL" id="AL445565">
    <property type="protein sequence ID" value="CAC13906.1"/>
    <property type="status" value="ALT_INIT"/>
    <property type="molecule type" value="Genomic_DNA"/>
</dbReference>
<dbReference type="PIR" id="E90603">
    <property type="entry name" value="E90603"/>
</dbReference>
<dbReference type="RefSeq" id="WP_041364234.1">
    <property type="nucleotide sequence ID" value="NC_002771.1"/>
</dbReference>
<dbReference type="SMR" id="Q98PI9"/>
<dbReference type="STRING" id="272635.gene:17577344"/>
<dbReference type="KEGG" id="mpu:MYPU_7330"/>
<dbReference type="eggNOG" id="COG0484">
    <property type="taxonomic scope" value="Bacteria"/>
</dbReference>
<dbReference type="HOGENOM" id="CLU_017633_0_7_14"/>
<dbReference type="BioCyc" id="MPUL272635:G1GT6-746-MONOMER"/>
<dbReference type="Proteomes" id="UP000000528">
    <property type="component" value="Chromosome"/>
</dbReference>
<dbReference type="GO" id="GO:0005737">
    <property type="term" value="C:cytoplasm"/>
    <property type="evidence" value="ECO:0007669"/>
    <property type="project" value="UniProtKB-SubCell"/>
</dbReference>
<dbReference type="GO" id="GO:0005524">
    <property type="term" value="F:ATP binding"/>
    <property type="evidence" value="ECO:0007669"/>
    <property type="project" value="InterPro"/>
</dbReference>
<dbReference type="GO" id="GO:0031072">
    <property type="term" value="F:heat shock protein binding"/>
    <property type="evidence" value="ECO:0007669"/>
    <property type="project" value="InterPro"/>
</dbReference>
<dbReference type="GO" id="GO:0051082">
    <property type="term" value="F:unfolded protein binding"/>
    <property type="evidence" value="ECO:0007669"/>
    <property type="project" value="UniProtKB-UniRule"/>
</dbReference>
<dbReference type="GO" id="GO:0008270">
    <property type="term" value="F:zinc ion binding"/>
    <property type="evidence" value="ECO:0007669"/>
    <property type="project" value="UniProtKB-UniRule"/>
</dbReference>
<dbReference type="GO" id="GO:0051085">
    <property type="term" value="P:chaperone cofactor-dependent protein refolding"/>
    <property type="evidence" value="ECO:0007669"/>
    <property type="project" value="TreeGrafter"/>
</dbReference>
<dbReference type="GO" id="GO:0006260">
    <property type="term" value="P:DNA replication"/>
    <property type="evidence" value="ECO:0007669"/>
    <property type="project" value="UniProtKB-KW"/>
</dbReference>
<dbReference type="GO" id="GO:0042026">
    <property type="term" value="P:protein refolding"/>
    <property type="evidence" value="ECO:0007669"/>
    <property type="project" value="TreeGrafter"/>
</dbReference>
<dbReference type="GO" id="GO:0009408">
    <property type="term" value="P:response to heat"/>
    <property type="evidence" value="ECO:0007669"/>
    <property type="project" value="InterPro"/>
</dbReference>
<dbReference type="CDD" id="cd06257">
    <property type="entry name" value="DnaJ"/>
    <property type="match status" value="1"/>
</dbReference>
<dbReference type="CDD" id="cd10747">
    <property type="entry name" value="DnaJ_C"/>
    <property type="match status" value="1"/>
</dbReference>
<dbReference type="CDD" id="cd10719">
    <property type="entry name" value="DnaJ_zf"/>
    <property type="match status" value="1"/>
</dbReference>
<dbReference type="FunFam" id="2.10.230.10:FF:000002">
    <property type="entry name" value="Molecular chaperone DnaJ"/>
    <property type="match status" value="1"/>
</dbReference>
<dbReference type="Gene3D" id="1.10.287.110">
    <property type="entry name" value="DnaJ domain"/>
    <property type="match status" value="1"/>
</dbReference>
<dbReference type="Gene3D" id="2.10.230.10">
    <property type="entry name" value="Heat shock protein DnaJ, cysteine-rich domain"/>
    <property type="match status" value="1"/>
</dbReference>
<dbReference type="Gene3D" id="2.60.260.20">
    <property type="entry name" value="Urease metallochaperone UreE, N-terminal domain"/>
    <property type="match status" value="2"/>
</dbReference>
<dbReference type="HAMAP" id="MF_01152">
    <property type="entry name" value="DnaJ"/>
    <property type="match status" value="1"/>
</dbReference>
<dbReference type="InterPro" id="IPR012724">
    <property type="entry name" value="DnaJ"/>
</dbReference>
<dbReference type="InterPro" id="IPR002939">
    <property type="entry name" value="DnaJ_C"/>
</dbReference>
<dbReference type="InterPro" id="IPR001623">
    <property type="entry name" value="DnaJ_domain"/>
</dbReference>
<dbReference type="InterPro" id="IPR008971">
    <property type="entry name" value="HSP40/DnaJ_pept-bd"/>
</dbReference>
<dbReference type="InterPro" id="IPR001305">
    <property type="entry name" value="HSP_DnaJ_Cys-rich_dom"/>
</dbReference>
<dbReference type="InterPro" id="IPR036410">
    <property type="entry name" value="HSP_DnaJ_Cys-rich_dom_sf"/>
</dbReference>
<dbReference type="InterPro" id="IPR036869">
    <property type="entry name" value="J_dom_sf"/>
</dbReference>
<dbReference type="NCBIfam" id="TIGR02349">
    <property type="entry name" value="DnaJ_bact"/>
    <property type="match status" value="1"/>
</dbReference>
<dbReference type="PANTHER" id="PTHR43096:SF48">
    <property type="entry name" value="CHAPERONE PROTEIN DNAJ"/>
    <property type="match status" value="1"/>
</dbReference>
<dbReference type="PANTHER" id="PTHR43096">
    <property type="entry name" value="DNAJ HOMOLOG 1, MITOCHONDRIAL-RELATED"/>
    <property type="match status" value="1"/>
</dbReference>
<dbReference type="Pfam" id="PF00226">
    <property type="entry name" value="DnaJ"/>
    <property type="match status" value="1"/>
</dbReference>
<dbReference type="Pfam" id="PF01556">
    <property type="entry name" value="DnaJ_C"/>
    <property type="match status" value="1"/>
</dbReference>
<dbReference type="Pfam" id="PF00684">
    <property type="entry name" value="DnaJ_CXXCXGXG"/>
    <property type="match status" value="1"/>
</dbReference>
<dbReference type="PRINTS" id="PR00625">
    <property type="entry name" value="JDOMAIN"/>
</dbReference>
<dbReference type="SMART" id="SM00271">
    <property type="entry name" value="DnaJ"/>
    <property type="match status" value="1"/>
</dbReference>
<dbReference type="SUPFAM" id="SSF46565">
    <property type="entry name" value="Chaperone J-domain"/>
    <property type="match status" value="1"/>
</dbReference>
<dbReference type="SUPFAM" id="SSF57938">
    <property type="entry name" value="DnaJ/Hsp40 cysteine-rich domain"/>
    <property type="match status" value="1"/>
</dbReference>
<dbReference type="SUPFAM" id="SSF49493">
    <property type="entry name" value="HSP40/DnaJ peptide-binding domain"/>
    <property type="match status" value="2"/>
</dbReference>
<dbReference type="PROSITE" id="PS50076">
    <property type="entry name" value="DNAJ_2"/>
    <property type="match status" value="1"/>
</dbReference>
<dbReference type="PROSITE" id="PS51188">
    <property type="entry name" value="ZF_CR"/>
    <property type="match status" value="1"/>
</dbReference>
<name>DNAJ_MYCPU</name>
<proteinExistence type="inferred from homology"/>
<keyword id="KW-0143">Chaperone</keyword>
<keyword id="KW-0963">Cytoplasm</keyword>
<keyword id="KW-0235">DNA replication</keyword>
<keyword id="KW-0479">Metal-binding</keyword>
<keyword id="KW-1185">Reference proteome</keyword>
<keyword id="KW-0677">Repeat</keyword>
<keyword id="KW-0346">Stress response</keyword>
<keyword id="KW-0862">Zinc</keyword>
<keyword id="KW-0863">Zinc-finger</keyword>
<evidence type="ECO:0000255" key="1">
    <source>
        <dbReference type="HAMAP-Rule" id="MF_01152"/>
    </source>
</evidence>
<evidence type="ECO:0000305" key="2"/>
<comment type="function">
    <text evidence="1">Participates actively in the response to hyperosmotic and heat shock by preventing the aggregation of stress-denatured proteins and by disaggregating proteins, also in an autonomous, DnaK-independent fashion. Unfolded proteins bind initially to DnaJ; upon interaction with the DnaJ-bound protein, DnaK hydrolyzes its bound ATP, resulting in the formation of a stable complex. GrpE releases ADP from DnaK; ATP binding to DnaK triggers the release of the substrate protein, thus completing the reaction cycle. Several rounds of ATP-dependent interactions between DnaJ, DnaK and GrpE are required for fully efficient folding. Also involved, together with DnaK and GrpE, in the DNA replication of plasmids through activation of initiation proteins.</text>
</comment>
<comment type="cofactor">
    <cofactor evidence="1">
        <name>Zn(2+)</name>
        <dbReference type="ChEBI" id="CHEBI:29105"/>
    </cofactor>
    <text evidence="1">Binds 2 Zn(2+) ions per monomer.</text>
</comment>
<comment type="subunit">
    <text evidence="1">Homodimer.</text>
</comment>
<comment type="subcellular location">
    <subcellularLocation>
        <location evidence="1">Cytoplasm</location>
    </subcellularLocation>
</comment>
<comment type="domain">
    <text evidence="1">The J domain is necessary and sufficient to stimulate DnaK ATPase activity. Zinc center 1 plays an important role in the autonomous, DnaK-independent chaperone activity of DnaJ. Zinc center 2 is essential for interaction with DnaK and for DnaJ activity.</text>
</comment>
<comment type="similarity">
    <text evidence="1">Belongs to the DnaJ family.</text>
</comment>
<comment type="sequence caution" evidence="2">
    <conflict type="erroneous initiation">
        <sequence resource="EMBL-CDS" id="CAC13906"/>
    </conflict>
</comment>
<gene>
    <name evidence="1" type="primary">dnaJ</name>
    <name type="ordered locus">MYPU_7330</name>
</gene>
<protein>
    <recommendedName>
        <fullName evidence="1">Chaperone protein DnaJ</fullName>
    </recommendedName>
</protein>
<organism>
    <name type="scientific">Mycoplasmopsis pulmonis (strain UAB CTIP)</name>
    <name type="common">Mycoplasma pulmonis</name>
    <dbReference type="NCBI Taxonomy" id="272635"/>
    <lineage>
        <taxon>Bacteria</taxon>
        <taxon>Bacillati</taxon>
        <taxon>Mycoplasmatota</taxon>
        <taxon>Mycoplasmoidales</taxon>
        <taxon>Metamycoplasmataceae</taxon>
        <taxon>Mycoplasmopsis</taxon>
    </lineage>
</organism>